<dbReference type="EC" id="3.1.26.5" evidence="1"/>
<dbReference type="EMBL" id="CP000454">
    <property type="protein sequence ID" value="ABK05546.1"/>
    <property type="molecule type" value="Genomic_DNA"/>
</dbReference>
<dbReference type="RefSeq" id="WP_011693992.1">
    <property type="nucleotide sequence ID" value="NC_008541.1"/>
</dbReference>
<dbReference type="SMR" id="A0K2M6"/>
<dbReference type="STRING" id="290399.Arth_4171"/>
<dbReference type="KEGG" id="art:Arth_4171"/>
<dbReference type="eggNOG" id="COG0594">
    <property type="taxonomic scope" value="Bacteria"/>
</dbReference>
<dbReference type="HOGENOM" id="CLU_117179_4_1_11"/>
<dbReference type="OrthoDB" id="196964at2"/>
<dbReference type="Proteomes" id="UP000000754">
    <property type="component" value="Chromosome"/>
</dbReference>
<dbReference type="GO" id="GO:0030677">
    <property type="term" value="C:ribonuclease P complex"/>
    <property type="evidence" value="ECO:0007669"/>
    <property type="project" value="TreeGrafter"/>
</dbReference>
<dbReference type="GO" id="GO:0042781">
    <property type="term" value="F:3'-tRNA processing endoribonuclease activity"/>
    <property type="evidence" value="ECO:0007669"/>
    <property type="project" value="TreeGrafter"/>
</dbReference>
<dbReference type="GO" id="GO:0004526">
    <property type="term" value="F:ribonuclease P activity"/>
    <property type="evidence" value="ECO:0007669"/>
    <property type="project" value="UniProtKB-UniRule"/>
</dbReference>
<dbReference type="GO" id="GO:0000049">
    <property type="term" value="F:tRNA binding"/>
    <property type="evidence" value="ECO:0007669"/>
    <property type="project" value="UniProtKB-UniRule"/>
</dbReference>
<dbReference type="GO" id="GO:0001682">
    <property type="term" value="P:tRNA 5'-leader removal"/>
    <property type="evidence" value="ECO:0007669"/>
    <property type="project" value="UniProtKB-UniRule"/>
</dbReference>
<dbReference type="Gene3D" id="3.30.230.10">
    <property type="match status" value="1"/>
</dbReference>
<dbReference type="HAMAP" id="MF_00227">
    <property type="entry name" value="RNase_P"/>
    <property type="match status" value="1"/>
</dbReference>
<dbReference type="InterPro" id="IPR020568">
    <property type="entry name" value="Ribosomal_Su5_D2-typ_SF"/>
</dbReference>
<dbReference type="InterPro" id="IPR014721">
    <property type="entry name" value="Ribsml_uS5_D2-typ_fold_subgr"/>
</dbReference>
<dbReference type="InterPro" id="IPR000100">
    <property type="entry name" value="RNase_P"/>
</dbReference>
<dbReference type="InterPro" id="IPR020539">
    <property type="entry name" value="RNase_P_CS"/>
</dbReference>
<dbReference type="NCBIfam" id="TIGR00188">
    <property type="entry name" value="rnpA"/>
    <property type="match status" value="1"/>
</dbReference>
<dbReference type="PANTHER" id="PTHR33992">
    <property type="entry name" value="RIBONUCLEASE P PROTEIN COMPONENT"/>
    <property type="match status" value="1"/>
</dbReference>
<dbReference type="PANTHER" id="PTHR33992:SF1">
    <property type="entry name" value="RIBONUCLEASE P PROTEIN COMPONENT"/>
    <property type="match status" value="1"/>
</dbReference>
<dbReference type="Pfam" id="PF00825">
    <property type="entry name" value="Ribonuclease_P"/>
    <property type="match status" value="1"/>
</dbReference>
<dbReference type="SUPFAM" id="SSF54211">
    <property type="entry name" value="Ribosomal protein S5 domain 2-like"/>
    <property type="match status" value="1"/>
</dbReference>
<dbReference type="PROSITE" id="PS00648">
    <property type="entry name" value="RIBONUCLEASE_P"/>
    <property type="match status" value="1"/>
</dbReference>
<sequence>MLATRNRLRTSTDFSTTVRSGVRNGRRNVVLYTVAIAADEPSRIGFIVSKSVGNAVVRNLVKRRLREAGALSLQQYGTGFAIVVRALPAAAAASWDQLLADYNAALETTMKRLGGRLPRAASVVSRETRQEGTPRA</sequence>
<feature type="chain" id="PRO_1000021373" description="Ribonuclease P protein component">
    <location>
        <begin position="1"/>
        <end position="136"/>
    </location>
</feature>
<accession>A0K2M6</accession>
<comment type="function">
    <text evidence="1">RNaseP catalyzes the removal of the 5'-leader sequence from pre-tRNA to produce the mature 5'-terminus. It can also cleave other RNA substrates such as 4.5S RNA. The protein component plays an auxiliary but essential role in vivo by binding to the 5'-leader sequence and broadening the substrate specificity of the ribozyme.</text>
</comment>
<comment type="catalytic activity">
    <reaction evidence="1">
        <text>Endonucleolytic cleavage of RNA, removing 5'-extranucleotides from tRNA precursor.</text>
        <dbReference type="EC" id="3.1.26.5"/>
    </reaction>
</comment>
<comment type="subunit">
    <text evidence="1">Consists of a catalytic RNA component (M1 or rnpB) and a protein subunit.</text>
</comment>
<comment type="similarity">
    <text evidence="1">Belongs to the RnpA family.</text>
</comment>
<protein>
    <recommendedName>
        <fullName evidence="1">Ribonuclease P protein component</fullName>
        <shortName evidence="1">RNase P protein</shortName>
        <shortName evidence="1">RNaseP protein</shortName>
        <ecNumber evidence="1">3.1.26.5</ecNumber>
    </recommendedName>
    <alternativeName>
        <fullName evidence="1">Protein C5</fullName>
    </alternativeName>
</protein>
<evidence type="ECO:0000255" key="1">
    <source>
        <dbReference type="HAMAP-Rule" id="MF_00227"/>
    </source>
</evidence>
<proteinExistence type="inferred from homology"/>
<reference key="1">
    <citation type="journal article" date="2013" name="Stand. Genomic Sci.">
        <title>Complete genome sequence of Arthrobacter sp. strain FB24.</title>
        <authorList>
            <person name="Nakatsu C.H."/>
            <person name="Barabote R."/>
            <person name="Thompson S."/>
            <person name="Bruce D."/>
            <person name="Detter C."/>
            <person name="Brettin T."/>
            <person name="Han C."/>
            <person name="Beasley F."/>
            <person name="Chen W."/>
            <person name="Konopka A."/>
            <person name="Xie G."/>
        </authorList>
    </citation>
    <scope>NUCLEOTIDE SEQUENCE [LARGE SCALE GENOMIC DNA]</scope>
    <source>
        <strain>FB24</strain>
    </source>
</reference>
<keyword id="KW-0255">Endonuclease</keyword>
<keyword id="KW-0378">Hydrolase</keyword>
<keyword id="KW-0540">Nuclease</keyword>
<keyword id="KW-1185">Reference proteome</keyword>
<keyword id="KW-0694">RNA-binding</keyword>
<keyword id="KW-0819">tRNA processing</keyword>
<organism>
    <name type="scientific">Arthrobacter sp. (strain FB24)</name>
    <dbReference type="NCBI Taxonomy" id="290399"/>
    <lineage>
        <taxon>Bacteria</taxon>
        <taxon>Bacillati</taxon>
        <taxon>Actinomycetota</taxon>
        <taxon>Actinomycetes</taxon>
        <taxon>Micrococcales</taxon>
        <taxon>Micrococcaceae</taxon>
        <taxon>Arthrobacter</taxon>
    </lineage>
</organism>
<name>RNPA_ARTS2</name>
<gene>
    <name evidence="1" type="primary">rnpA</name>
    <name type="ordered locus">Arth_4171</name>
</gene>